<feature type="chain" id="PRO_1000015577" description="33 kDa chaperonin">
    <location>
        <begin position="1"/>
        <end position="290"/>
    </location>
</feature>
<feature type="disulfide bond" description="Redox-active" evidence="1">
    <location>
        <begin position="235"/>
        <end position="237"/>
    </location>
</feature>
<feature type="disulfide bond" description="Redox-active" evidence="1">
    <location>
        <begin position="268"/>
        <end position="271"/>
    </location>
</feature>
<reference key="1">
    <citation type="journal article" date="2007" name="J. Bacteriol.">
        <title>Genome sequence of Avery's virulent serotype 2 strain D39 of Streptococcus pneumoniae and comparison with that of unencapsulated laboratory strain R6.</title>
        <authorList>
            <person name="Lanie J.A."/>
            <person name="Ng W.-L."/>
            <person name="Kazmierczak K.M."/>
            <person name="Andrzejewski T.M."/>
            <person name="Davidsen T.M."/>
            <person name="Wayne K.J."/>
            <person name="Tettelin H."/>
            <person name="Glass J.I."/>
            <person name="Winkler M.E."/>
        </authorList>
    </citation>
    <scope>NUCLEOTIDE SEQUENCE [LARGE SCALE GENOMIC DNA]</scope>
    <source>
        <strain>D39 / NCTC 7466</strain>
    </source>
</reference>
<name>HSLO_STRP2</name>
<accession>Q04HY8</accession>
<sequence length="290" mass="31663">MDKIIKTISESGAFRAFVLDSTETVRTAQEKHQTQASSTVALGRTLIASQILAANEKGNTKLTVKVLGSSSLGAIITVADTKGNVKGYVQNPGVDIKKTATGEVLVGPFVGNGQFLVITDYGTGNPYNSITPLISGEIGEDLAFYLTESQQTPSAVGLNVLLDEEDKVKVAGGFLVQVLPGAKKEEIARFEKRIQEMPAISTLLESDDHIEALLKAIYGDEAYKRLSEEEIRFQCDCSHERFMNALASLPSSDLQEMKEEDHGAEITCQFCQTTYNFDEKDLEELIRDKS</sequence>
<keyword id="KW-0143">Chaperone</keyword>
<keyword id="KW-0963">Cytoplasm</keyword>
<keyword id="KW-1015">Disulfide bond</keyword>
<keyword id="KW-0676">Redox-active center</keyword>
<keyword id="KW-1185">Reference proteome</keyword>
<keyword id="KW-0862">Zinc</keyword>
<evidence type="ECO:0000255" key="1">
    <source>
        <dbReference type="HAMAP-Rule" id="MF_00117"/>
    </source>
</evidence>
<gene>
    <name evidence="1" type="primary">hslO</name>
    <name type="ordered locus">SPD_2015</name>
</gene>
<organism>
    <name type="scientific">Streptococcus pneumoniae serotype 2 (strain D39 / NCTC 7466)</name>
    <dbReference type="NCBI Taxonomy" id="373153"/>
    <lineage>
        <taxon>Bacteria</taxon>
        <taxon>Bacillati</taxon>
        <taxon>Bacillota</taxon>
        <taxon>Bacilli</taxon>
        <taxon>Lactobacillales</taxon>
        <taxon>Streptococcaceae</taxon>
        <taxon>Streptococcus</taxon>
    </lineage>
</organism>
<protein>
    <recommendedName>
        <fullName evidence="1">33 kDa chaperonin</fullName>
    </recommendedName>
    <alternativeName>
        <fullName evidence="1">Heat shock protein 33 homolog</fullName>
        <shortName evidence="1">HSP33</shortName>
    </alternativeName>
</protein>
<proteinExistence type="inferred from homology"/>
<dbReference type="EMBL" id="CP000410">
    <property type="protein sequence ID" value="ABJ54265.1"/>
    <property type="molecule type" value="Genomic_DNA"/>
</dbReference>
<dbReference type="RefSeq" id="WP_000357847.1">
    <property type="nucleotide sequence ID" value="NZ_JAMLJR010000007.1"/>
</dbReference>
<dbReference type="SMR" id="Q04HY8"/>
<dbReference type="PaxDb" id="373153-SPD_2015"/>
<dbReference type="KEGG" id="spd:SPD_2015"/>
<dbReference type="eggNOG" id="COG1281">
    <property type="taxonomic scope" value="Bacteria"/>
</dbReference>
<dbReference type="HOGENOM" id="CLU_054493_1_0_9"/>
<dbReference type="BioCyc" id="SPNE373153:G1G6V-2162-MONOMER"/>
<dbReference type="Proteomes" id="UP000001452">
    <property type="component" value="Chromosome"/>
</dbReference>
<dbReference type="GO" id="GO:0005737">
    <property type="term" value="C:cytoplasm"/>
    <property type="evidence" value="ECO:0007669"/>
    <property type="project" value="UniProtKB-SubCell"/>
</dbReference>
<dbReference type="GO" id="GO:0044183">
    <property type="term" value="F:protein folding chaperone"/>
    <property type="evidence" value="ECO:0007669"/>
    <property type="project" value="TreeGrafter"/>
</dbReference>
<dbReference type="GO" id="GO:0051082">
    <property type="term" value="F:unfolded protein binding"/>
    <property type="evidence" value="ECO:0007669"/>
    <property type="project" value="UniProtKB-UniRule"/>
</dbReference>
<dbReference type="GO" id="GO:0042026">
    <property type="term" value="P:protein refolding"/>
    <property type="evidence" value="ECO:0007669"/>
    <property type="project" value="TreeGrafter"/>
</dbReference>
<dbReference type="CDD" id="cd00498">
    <property type="entry name" value="Hsp33"/>
    <property type="match status" value="1"/>
</dbReference>
<dbReference type="Gene3D" id="3.55.30.10">
    <property type="entry name" value="Hsp33 domain"/>
    <property type="match status" value="1"/>
</dbReference>
<dbReference type="Gene3D" id="3.90.1280.10">
    <property type="entry name" value="HSP33 redox switch-like"/>
    <property type="match status" value="1"/>
</dbReference>
<dbReference type="HAMAP" id="MF_00117">
    <property type="entry name" value="HslO"/>
    <property type="match status" value="1"/>
</dbReference>
<dbReference type="InterPro" id="IPR000397">
    <property type="entry name" value="Heat_shock_Hsp33"/>
</dbReference>
<dbReference type="InterPro" id="IPR016154">
    <property type="entry name" value="Heat_shock_Hsp33_C"/>
</dbReference>
<dbReference type="InterPro" id="IPR016153">
    <property type="entry name" value="Heat_shock_Hsp33_N"/>
</dbReference>
<dbReference type="NCBIfam" id="NF001033">
    <property type="entry name" value="PRK00114.1"/>
    <property type="match status" value="1"/>
</dbReference>
<dbReference type="PANTHER" id="PTHR30111">
    <property type="entry name" value="33 KDA CHAPERONIN"/>
    <property type="match status" value="1"/>
</dbReference>
<dbReference type="PANTHER" id="PTHR30111:SF1">
    <property type="entry name" value="33 KDA CHAPERONIN"/>
    <property type="match status" value="1"/>
</dbReference>
<dbReference type="Pfam" id="PF01430">
    <property type="entry name" value="HSP33"/>
    <property type="match status" value="1"/>
</dbReference>
<dbReference type="PIRSF" id="PIRSF005261">
    <property type="entry name" value="Heat_shock_Hsp33"/>
    <property type="match status" value="1"/>
</dbReference>
<dbReference type="SUPFAM" id="SSF64397">
    <property type="entry name" value="Hsp33 domain"/>
    <property type="match status" value="1"/>
</dbReference>
<dbReference type="SUPFAM" id="SSF118352">
    <property type="entry name" value="HSP33 redox switch-like"/>
    <property type="match status" value="1"/>
</dbReference>
<comment type="function">
    <text evidence="1">Redox regulated molecular chaperone. Protects both thermally unfolding and oxidatively damaged proteins from irreversible aggregation. Plays an important role in the bacterial defense system toward oxidative stress.</text>
</comment>
<comment type="subcellular location">
    <subcellularLocation>
        <location evidence="1">Cytoplasm</location>
    </subcellularLocation>
</comment>
<comment type="PTM">
    <text evidence="1">Under oxidizing conditions two disulfide bonds are formed involving the reactive cysteines. Under reducing conditions zinc is bound to the reactive cysteines and the protein is inactive.</text>
</comment>
<comment type="similarity">
    <text evidence="1">Belongs to the HSP33 family.</text>
</comment>